<sequence length="382" mass="36833">MQFLSVIPEQVESAAQDLAGIRSALSASYAAAAGPTTAVVSAAEDEVSTAIASIFGAYGRQCQVLSAQASAFHDEFVNLLKTGATAYRNTEFANAQSNVLNAVNAPARSLLGHPSAAESVQNSAPTLGGGHSTVTAGLAAQAGRAVATVEQQAAAAVAPLPSAGAGLAQVVNGVVTAGQGSAAKLATALQSAAPWLAKSGGEFIVAGQSALTGVALLQPAVVGVVQAGGTFLTAGTSAATGLGLLTLAGVEFSQGVGNLALASGTAATGLGLLGSAGVQLFSPAFLLAVPTALGGVGSLAIAVVQLVQGVQHLSLVVPNVVAGIAALQTAGAQFAQGVNHTMLAAQLGAPGIAVLQTAGGHFAQGIGHLTTAGNAAVTVLIS</sequence>
<name>PE23_MYCTU</name>
<protein>
    <recommendedName>
        <fullName>Uncharacterized PE family protein PE23</fullName>
    </recommendedName>
</protein>
<reference key="1">
    <citation type="journal article" date="1998" name="Nature">
        <title>Deciphering the biology of Mycobacterium tuberculosis from the complete genome sequence.</title>
        <authorList>
            <person name="Cole S.T."/>
            <person name="Brosch R."/>
            <person name="Parkhill J."/>
            <person name="Garnier T."/>
            <person name="Churcher C.M."/>
            <person name="Harris D.E."/>
            <person name="Gordon S.V."/>
            <person name="Eiglmeier K."/>
            <person name="Gas S."/>
            <person name="Barry C.E. III"/>
            <person name="Tekaia F."/>
            <person name="Badcock K."/>
            <person name="Basham D."/>
            <person name="Brown D."/>
            <person name="Chillingworth T."/>
            <person name="Connor R."/>
            <person name="Davies R.M."/>
            <person name="Devlin K."/>
            <person name="Feltwell T."/>
            <person name="Gentles S."/>
            <person name="Hamlin N."/>
            <person name="Holroyd S."/>
            <person name="Hornsby T."/>
            <person name="Jagels K."/>
            <person name="Krogh A."/>
            <person name="McLean J."/>
            <person name="Moule S."/>
            <person name="Murphy L.D."/>
            <person name="Oliver S."/>
            <person name="Osborne J."/>
            <person name="Quail M.A."/>
            <person name="Rajandream M.A."/>
            <person name="Rogers J."/>
            <person name="Rutter S."/>
            <person name="Seeger K."/>
            <person name="Skelton S."/>
            <person name="Squares S."/>
            <person name="Squares R."/>
            <person name="Sulston J.E."/>
            <person name="Taylor K."/>
            <person name="Whitehead S."/>
            <person name="Barrell B.G."/>
        </authorList>
    </citation>
    <scope>NUCLEOTIDE SEQUENCE [LARGE SCALE GENOMIC DNA]</scope>
    <source>
        <strain>ATCC 25618 / H37Rv</strain>
    </source>
</reference>
<reference key="2">
    <citation type="journal article" date="2011" name="Mol. Cell. Proteomics">
        <title>Proteogenomic analysis of Mycobacterium tuberculosis by high resolution mass spectrometry.</title>
        <authorList>
            <person name="Kelkar D.S."/>
            <person name="Kumar D."/>
            <person name="Kumar P."/>
            <person name="Balakrishnan L."/>
            <person name="Muthusamy B."/>
            <person name="Yadav A.K."/>
            <person name="Shrivastava P."/>
            <person name="Marimuthu A."/>
            <person name="Anand S."/>
            <person name="Sundaram H."/>
            <person name="Kingsbury R."/>
            <person name="Harsha H.C."/>
            <person name="Nair B."/>
            <person name="Prasad T.S."/>
            <person name="Chauhan D.S."/>
            <person name="Katoch K."/>
            <person name="Katoch V.M."/>
            <person name="Kumar P."/>
            <person name="Chaerkady R."/>
            <person name="Ramachandran S."/>
            <person name="Dash D."/>
            <person name="Pandey A."/>
        </authorList>
    </citation>
    <scope>IDENTIFICATION BY MASS SPECTROMETRY [LARGE SCALE ANALYSIS]</scope>
    <source>
        <strain>ATCC 25618 / H37Rv</strain>
    </source>
</reference>
<dbReference type="EMBL" id="AL123456">
    <property type="protein sequence ID" value="CCP45115.1"/>
    <property type="molecule type" value="Genomic_DNA"/>
</dbReference>
<dbReference type="PIR" id="A70705">
    <property type="entry name" value="A70705"/>
</dbReference>
<dbReference type="RefSeq" id="WP_003411972.1">
    <property type="nucleotide sequence ID" value="NZ_NVQJ01000012.1"/>
</dbReference>
<dbReference type="RefSeq" id="YP_177867.1">
    <property type="nucleotide sequence ID" value="NC_000962.3"/>
</dbReference>
<dbReference type="SMR" id="P9WIG9"/>
<dbReference type="STRING" id="83332.Rv2328"/>
<dbReference type="PaxDb" id="83332-Rv2328"/>
<dbReference type="DNASU" id="888111"/>
<dbReference type="GeneID" id="888111"/>
<dbReference type="KEGG" id="mtu:Rv2328"/>
<dbReference type="KEGG" id="mtv:RVBD_2328"/>
<dbReference type="TubercuList" id="Rv2328"/>
<dbReference type="eggNOG" id="COG0657">
    <property type="taxonomic scope" value="Bacteria"/>
</dbReference>
<dbReference type="InParanoid" id="P9WIG9"/>
<dbReference type="OrthoDB" id="4718956at2"/>
<dbReference type="Proteomes" id="UP000001584">
    <property type="component" value="Chromosome"/>
</dbReference>
<dbReference type="GO" id="GO:0005886">
    <property type="term" value="C:plasma membrane"/>
    <property type="evidence" value="ECO:0007669"/>
    <property type="project" value="UniProtKB-SubCell"/>
</dbReference>
<dbReference type="Gene3D" id="1.10.287.850">
    <property type="entry name" value="HP0062-like domain"/>
    <property type="match status" value="1"/>
</dbReference>
<dbReference type="InterPro" id="IPR000084">
    <property type="entry name" value="PE-PGRS_N"/>
</dbReference>
<dbReference type="Pfam" id="PF00934">
    <property type="entry name" value="PE"/>
    <property type="match status" value="1"/>
</dbReference>
<dbReference type="SUPFAM" id="SSF140459">
    <property type="entry name" value="PE/PPE dimer-like"/>
    <property type="match status" value="1"/>
</dbReference>
<gene>
    <name type="primary">PE23</name>
    <name type="ordered locus">Rv2328</name>
    <name type="ORF">MTCY3G12.06</name>
</gene>
<organism>
    <name type="scientific">Mycobacterium tuberculosis (strain ATCC 25618 / H37Rv)</name>
    <dbReference type="NCBI Taxonomy" id="83332"/>
    <lineage>
        <taxon>Bacteria</taxon>
        <taxon>Bacillati</taxon>
        <taxon>Actinomycetota</taxon>
        <taxon>Actinomycetes</taxon>
        <taxon>Mycobacteriales</taxon>
        <taxon>Mycobacteriaceae</taxon>
        <taxon>Mycobacterium</taxon>
        <taxon>Mycobacterium tuberculosis complex</taxon>
    </lineage>
</organism>
<comment type="subcellular location">
    <subcellularLocation>
        <location evidence="2">Cell membrane</location>
        <topology evidence="2">Multi-pass membrane protein</topology>
    </subcellularLocation>
</comment>
<comment type="similarity">
    <text evidence="2">Belongs to the mycobacterial PE family.</text>
</comment>
<accession>P9WIG9</accession>
<accession>L0T9H7</accession>
<accession>P0A684</accession>
<accession>P71884</accession>
<proteinExistence type="evidence at protein level"/>
<keyword id="KW-1003">Cell membrane</keyword>
<keyword id="KW-0472">Membrane</keyword>
<keyword id="KW-1185">Reference proteome</keyword>
<keyword id="KW-0812">Transmembrane</keyword>
<keyword id="KW-1133">Transmembrane helix</keyword>
<evidence type="ECO:0000255" key="1"/>
<evidence type="ECO:0000305" key="2"/>
<feature type="chain" id="PRO_0000216162" description="Uncharacterized PE family protein PE23">
    <location>
        <begin position="1"/>
        <end position="382"/>
    </location>
</feature>
<feature type="transmembrane region" description="Helical" evidence="1">
    <location>
        <begin position="23"/>
        <end position="43"/>
    </location>
</feature>
<feature type="transmembrane region" description="Helical" evidence="1">
    <location>
        <begin position="155"/>
        <end position="175"/>
    </location>
</feature>
<feature type="transmembrane region" description="Helical" evidence="1">
    <location>
        <begin position="203"/>
        <end position="223"/>
    </location>
</feature>
<feature type="transmembrane region" description="Helical" evidence="1">
    <location>
        <begin position="230"/>
        <end position="250"/>
    </location>
</feature>
<feature type="transmembrane region" description="Helical" evidence="1">
    <location>
        <begin position="261"/>
        <end position="281"/>
    </location>
</feature>
<feature type="transmembrane region" description="Helical" evidence="1">
    <location>
        <begin position="284"/>
        <end position="304"/>
    </location>
</feature>
<feature type="transmembrane region" description="Helical" evidence="1">
    <location>
        <begin position="315"/>
        <end position="335"/>
    </location>
</feature>
<feature type="transmembrane region" description="Helical" evidence="1">
    <location>
        <begin position="347"/>
        <end position="367"/>
    </location>
</feature>
<feature type="domain" description="PE" evidence="1">
    <location>
        <begin position="1"/>
        <end position="92"/>
    </location>
</feature>